<protein>
    <recommendedName>
        <fullName evidence="1">NAD(P)H-quinone oxidoreductase subunit O</fullName>
        <ecNumber evidence="1">7.1.1.-</ecNumber>
    </recommendedName>
    <alternativeName>
        <fullName evidence="1">NAD(P)H dehydrogenase I subunit O</fullName>
    </alternativeName>
    <alternativeName>
        <fullName>NDH-1 subunit O</fullName>
    </alternativeName>
    <alternativeName>
        <fullName>NDH-O</fullName>
    </alternativeName>
</protein>
<feature type="chain" id="PRO_0000353636" description="NAD(P)H-quinone oxidoreductase subunit O">
    <location>
        <begin position="1"/>
        <end position="71"/>
    </location>
</feature>
<sequence length="71" mass="7927">MAATIKKGALVRVVTGNLENSLEALASDRRLPSYMFNSTAEVLDVKDDYALIKFYVPTPSVWLKLEQLEPV</sequence>
<accession>B0JRM7</accession>
<reference key="1">
    <citation type="journal article" date="2007" name="DNA Res.">
        <title>Complete genomic structure of the bloom-forming toxic cyanobacterium Microcystis aeruginosa NIES-843.</title>
        <authorList>
            <person name="Kaneko T."/>
            <person name="Nakajima N."/>
            <person name="Okamoto S."/>
            <person name="Suzuki I."/>
            <person name="Tanabe Y."/>
            <person name="Tamaoki M."/>
            <person name="Nakamura Y."/>
            <person name="Kasai F."/>
            <person name="Watanabe A."/>
            <person name="Kawashima K."/>
            <person name="Kishida Y."/>
            <person name="Ono A."/>
            <person name="Shimizu Y."/>
            <person name="Takahashi C."/>
            <person name="Minami C."/>
            <person name="Fujishiro T."/>
            <person name="Kohara M."/>
            <person name="Katoh M."/>
            <person name="Nakazaki N."/>
            <person name="Nakayama S."/>
            <person name="Yamada M."/>
            <person name="Tabata S."/>
            <person name="Watanabe M.M."/>
        </authorList>
    </citation>
    <scope>NUCLEOTIDE SEQUENCE [LARGE SCALE GENOMIC DNA]</scope>
    <source>
        <strain>NIES-843 / IAM M-247</strain>
    </source>
</reference>
<name>NDHO_MICAN</name>
<comment type="function">
    <text evidence="1">NDH-1 shuttles electrons from an unknown electron donor, via FMN and iron-sulfur (Fe-S) centers, to quinones in the respiratory and/or the photosynthetic chain. The immediate electron acceptor for the enzyme in this species is believed to be plastoquinone. Couples the redox reaction to proton translocation, and thus conserves the redox energy in a proton gradient. Cyanobacterial NDH-1 also plays a role in inorganic carbon-concentration.</text>
</comment>
<comment type="catalytic activity">
    <reaction evidence="1">
        <text>a plastoquinone + NADH + (n+1) H(+)(in) = a plastoquinol + NAD(+) + n H(+)(out)</text>
        <dbReference type="Rhea" id="RHEA:42608"/>
        <dbReference type="Rhea" id="RHEA-COMP:9561"/>
        <dbReference type="Rhea" id="RHEA-COMP:9562"/>
        <dbReference type="ChEBI" id="CHEBI:15378"/>
        <dbReference type="ChEBI" id="CHEBI:17757"/>
        <dbReference type="ChEBI" id="CHEBI:57540"/>
        <dbReference type="ChEBI" id="CHEBI:57945"/>
        <dbReference type="ChEBI" id="CHEBI:62192"/>
    </reaction>
</comment>
<comment type="catalytic activity">
    <reaction evidence="1">
        <text>a plastoquinone + NADPH + (n+1) H(+)(in) = a plastoquinol + NADP(+) + n H(+)(out)</text>
        <dbReference type="Rhea" id="RHEA:42612"/>
        <dbReference type="Rhea" id="RHEA-COMP:9561"/>
        <dbReference type="Rhea" id="RHEA-COMP:9562"/>
        <dbReference type="ChEBI" id="CHEBI:15378"/>
        <dbReference type="ChEBI" id="CHEBI:17757"/>
        <dbReference type="ChEBI" id="CHEBI:57783"/>
        <dbReference type="ChEBI" id="CHEBI:58349"/>
        <dbReference type="ChEBI" id="CHEBI:62192"/>
    </reaction>
</comment>
<comment type="subunit">
    <text evidence="1">NDH-1 can be composed of about 15 different subunits; different subcomplexes with different compositions have been identified which probably have different functions.</text>
</comment>
<comment type="subcellular location">
    <subcellularLocation>
        <location evidence="1">Cellular thylakoid membrane</location>
        <topology evidence="1">Peripheral membrane protein</topology>
        <orientation evidence="1">Cytoplasmic side</orientation>
    </subcellularLocation>
</comment>
<comment type="similarity">
    <text evidence="1">Belongs to the complex I NdhO subunit family.</text>
</comment>
<gene>
    <name evidence="1" type="primary">ndhO</name>
    <name type="ordered locus">MAE_09550</name>
</gene>
<evidence type="ECO:0000255" key="1">
    <source>
        <dbReference type="HAMAP-Rule" id="MF_01354"/>
    </source>
</evidence>
<organism>
    <name type="scientific">Microcystis aeruginosa (strain NIES-843 / IAM M-2473)</name>
    <dbReference type="NCBI Taxonomy" id="449447"/>
    <lineage>
        <taxon>Bacteria</taxon>
        <taxon>Bacillati</taxon>
        <taxon>Cyanobacteriota</taxon>
        <taxon>Cyanophyceae</taxon>
        <taxon>Oscillatoriophycideae</taxon>
        <taxon>Chroococcales</taxon>
        <taxon>Microcystaceae</taxon>
        <taxon>Microcystis</taxon>
    </lineage>
</organism>
<proteinExistence type="inferred from homology"/>
<dbReference type="EC" id="7.1.1.-" evidence="1"/>
<dbReference type="EMBL" id="AP009552">
    <property type="protein sequence ID" value="BAG00777.1"/>
    <property type="molecule type" value="Genomic_DNA"/>
</dbReference>
<dbReference type="RefSeq" id="WP_002758722.1">
    <property type="nucleotide sequence ID" value="NC_010296.1"/>
</dbReference>
<dbReference type="SMR" id="B0JRM7"/>
<dbReference type="STRING" id="449447.MAE_09550"/>
<dbReference type="PaxDb" id="449447-MAE_09550"/>
<dbReference type="EnsemblBacteria" id="BAG00777">
    <property type="protein sequence ID" value="BAG00777"/>
    <property type="gene ID" value="MAE_09550"/>
</dbReference>
<dbReference type="KEGG" id="mar:MAE_09550"/>
<dbReference type="eggNOG" id="ENOG5032XZT">
    <property type="taxonomic scope" value="Bacteria"/>
</dbReference>
<dbReference type="HOGENOM" id="CLU_195299_0_0_3"/>
<dbReference type="BioCyc" id="MAER449447:MAE_RS04200-MONOMER"/>
<dbReference type="Proteomes" id="UP000001510">
    <property type="component" value="Chromosome"/>
</dbReference>
<dbReference type="GO" id="GO:0031676">
    <property type="term" value="C:plasma membrane-derived thylakoid membrane"/>
    <property type="evidence" value="ECO:0007669"/>
    <property type="project" value="UniProtKB-SubCell"/>
</dbReference>
<dbReference type="GO" id="GO:0016655">
    <property type="term" value="F:oxidoreductase activity, acting on NAD(P)H, quinone or similar compound as acceptor"/>
    <property type="evidence" value="ECO:0007669"/>
    <property type="project" value="UniProtKB-UniRule"/>
</dbReference>
<dbReference type="GO" id="GO:0048038">
    <property type="term" value="F:quinone binding"/>
    <property type="evidence" value="ECO:0007669"/>
    <property type="project" value="UniProtKB-KW"/>
</dbReference>
<dbReference type="HAMAP" id="MF_01354">
    <property type="entry name" value="NDH1_NDH1O"/>
    <property type="match status" value="1"/>
</dbReference>
<dbReference type="InterPro" id="IPR020905">
    <property type="entry name" value="NdhO"/>
</dbReference>
<dbReference type="Pfam" id="PF11910">
    <property type="entry name" value="NdhO"/>
    <property type="match status" value="1"/>
</dbReference>
<keyword id="KW-0472">Membrane</keyword>
<keyword id="KW-0520">NAD</keyword>
<keyword id="KW-0521">NADP</keyword>
<keyword id="KW-0618">Plastoquinone</keyword>
<keyword id="KW-0874">Quinone</keyword>
<keyword id="KW-0793">Thylakoid</keyword>
<keyword id="KW-1278">Translocase</keyword>
<keyword id="KW-0813">Transport</keyword>